<feature type="chain" id="PRO_0000063457" description="Chaperonin GroEL">
    <location>
        <begin position="1"/>
        <end position="544"/>
    </location>
</feature>
<feature type="binding site" evidence="1">
    <location>
        <begin position="30"/>
        <end position="33"/>
    </location>
    <ligand>
        <name>ATP</name>
        <dbReference type="ChEBI" id="CHEBI:30616"/>
    </ligand>
</feature>
<feature type="binding site" evidence="1">
    <location>
        <position position="51"/>
    </location>
    <ligand>
        <name>ATP</name>
        <dbReference type="ChEBI" id="CHEBI:30616"/>
    </ligand>
</feature>
<feature type="binding site" evidence="1">
    <location>
        <begin position="87"/>
        <end position="91"/>
    </location>
    <ligand>
        <name>ATP</name>
        <dbReference type="ChEBI" id="CHEBI:30616"/>
    </ligand>
</feature>
<feature type="binding site" evidence="1">
    <location>
        <position position="415"/>
    </location>
    <ligand>
        <name>ATP</name>
        <dbReference type="ChEBI" id="CHEBI:30616"/>
    </ligand>
</feature>
<feature type="binding site" evidence="1">
    <location>
        <position position="495"/>
    </location>
    <ligand>
        <name>ATP</name>
        <dbReference type="ChEBI" id="CHEBI:30616"/>
    </ligand>
</feature>
<feature type="sequence variant" description="In strain: PID 2.">
    <original>A</original>
    <variation>Y</variation>
    <location>
        <position position="106"/>
    </location>
</feature>
<feature type="sequence variant" description="In strain: PID 2.">
    <original>A</original>
    <variation>G</variation>
    <location>
        <position position="298"/>
    </location>
</feature>
<feature type="sequence variant" description="In strain: PID 2.">
    <original>D</original>
    <variation>E</variation>
    <location>
        <position position="437"/>
    </location>
</feature>
<feature type="sequence variant" description="In strain: PID 2.">
    <original>L</original>
    <variation>V</variation>
    <location>
        <position position="451"/>
    </location>
</feature>
<feature type="sequence variant" description="In strain: PID 2.">
    <original>L</original>
    <variation>H</variation>
    <location>
        <position position="494"/>
    </location>
</feature>
<feature type="sequence variant" description="In strain: PID 2.">
    <location>
        <begin position="541"/>
        <end position="543"/>
    </location>
</feature>
<feature type="sequence conflict" description="In Ref. 2; AA sequence." evidence="3" ref="2">
    <original>R</original>
    <variation>C</variation>
    <location>
        <position position="13"/>
    </location>
</feature>
<protein>
    <recommendedName>
        <fullName evidence="1">Chaperonin GroEL</fullName>
        <ecNumber evidence="1">5.6.1.7</ecNumber>
    </recommendedName>
    <alternativeName>
        <fullName evidence="1">60 kDa chaperonin</fullName>
    </alternativeName>
    <alternativeName>
        <fullName>63 kDa stress protein</fullName>
    </alternativeName>
    <alternativeName>
        <fullName evidence="1">Chaperonin-60</fullName>
        <shortName evidence="1">Cpn60</shortName>
    </alternativeName>
    <alternativeName>
        <fullName>GSP63</fullName>
    </alternativeName>
</protein>
<accession>P29842</accession>
<keyword id="KW-0067">ATP-binding</keyword>
<keyword id="KW-0998">Cell outer membrane</keyword>
<keyword id="KW-0143">Chaperone</keyword>
<keyword id="KW-0903">Direct protein sequencing</keyword>
<keyword id="KW-0413">Isomerase</keyword>
<keyword id="KW-0472">Membrane</keyword>
<keyword id="KW-0547">Nucleotide-binding</keyword>
<dbReference type="EC" id="5.6.1.7" evidence="1"/>
<dbReference type="EMBL" id="Z23008">
    <property type="protein sequence ID" value="CAA80550.1"/>
    <property type="molecule type" value="Genomic_DNA"/>
</dbReference>
<dbReference type="EMBL" id="Z23009">
    <property type="protein sequence ID" value="CAA80551.1"/>
    <property type="molecule type" value="Genomic_DNA"/>
</dbReference>
<dbReference type="PIR" id="S61300">
    <property type="entry name" value="S61300"/>
</dbReference>
<dbReference type="PIR" id="S61301">
    <property type="entry name" value="S61301"/>
</dbReference>
<dbReference type="SMR" id="P29842"/>
<dbReference type="GO" id="GO:0009279">
    <property type="term" value="C:cell outer membrane"/>
    <property type="evidence" value="ECO:0007669"/>
    <property type="project" value="UniProtKB-SubCell"/>
</dbReference>
<dbReference type="GO" id="GO:0005737">
    <property type="term" value="C:cytoplasm"/>
    <property type="evidence" value="ECO:0007669"/>
    <property type="project" value="UniProtKB-UniRule"/>
</dbReference>
<dbReference type="GO" id="GO:0005524">
    <property type="term" value="F:ATP binding"/>
    <property type="evidence" value="ECO:0007669"/>
    <property type="project" value="UniProtKB-UniRule"/>
</dbReference>
<dbReference type="GO" id="GO:0140662">
    <property type="term" value="F:ATP-dependent protein folding chaperone"/>
    <property type="evidence" value="ECO:0007669"/>
    <property type="project" value="InterPro"/>
</dbReference>
<dbReference type="GO" id="GO:0016853">
    <property type="term" value="F:isomerase activity"/>
    <property type="evidence" value="ECO:0007669"/>
    <property type="project" value="UniProtKB-KW"/>
</dbReference>
<dbReference type="GO" id="GO:0051082">
    <property type="term" value="F:unfolded protein binding"/>
    <property type="evidence" value="ECO:0007669"/>
    <property type="project" value="UniProtKB-UniRule"/>
</dbReference>
<dbReference type="GO" id="GO:0042026">
    <property type="term" value="P:protein refolding"/>
    <property type="evidence" value="ECO:0007669"/>
    <property type="project" value="UniProtKB-UniRule"/>
</dbReference>
<dbReference type="CDD" id="cd03344">
    <property type="entry name" value="GroEL"/>
    <property type="match status" value="1"/>
</dbReference>
<dbReference type="FunFam" id="1.10.560.10:FF:000001">
    <property type="entry name" value="60 kDa chaperonin"/>
    <property type="match status" value="1"/>
</dbReference>
<dbReference type="FunFam" id="3.50.7.10:FF:000001">
    <property type="entry name" value="60 kDa chaperonin"/>
    <property type="match status" value="1"/>
</dbReference>
<dbReference type="Gene3D" id="3.50.7.10">
    <property type="entry name" value="GroEL"/>
    <property type="match status" value="1"/>
</dbReference>
<dbReference type="Gene3D" id="1.10.560.10">
    <property type="entry name" value="GroEL-like equatorial domain"/>
    <property type="match status" value="1"/>
</dbReference>
<dbReference type="Gene3D" id="3.30.260.10">
    <property type="entry name" value="TCP-1-like chaperonin intermediate domain"/>
    <property type="match status" value="1"/>
</dbReference>
<dbReference type="HAMAP" id="MF_00600">
    <property type="entry name" value="CH60"/>
    <property type="match status" value="1"/>
</dbReference>
<dbReference type="InterPro" id="IPR018370">
    <property type="entry name" value="Chaperonin_Cpn60_CS"/>
</dbReference>
<dbReference type="InterPro" id="IPR001844">
    <property type="entry name" value="Cpn60/GroEL"/>
</dbReference>
<dbReference type="InterPro" id="IPR002423">
    <property type="entry name" value="Cpn60/GroEL/TCP-1"/>
</dbReference>
<dbReference type="InterPro" id="IPR027409">
    <property type="entry name" value="GroEL-like_apical_dom_sf"/>
</dbReference>
<dbReference type="InterPro" id="IPR027413">
    <property type="entry name" value="GROEL-like_equatorial_sf"/>
</dbReference>
<dbReference type="InterPro" id="IPR027410">
    <property type="entry name" value="TCP-1-like_intermed_sf"/>
</dbReference>
<dbReference type="NCBIfam" id="TIGR02348">
    <property type="entry name" value="GroEL"/>
    <property type="match status" value="1"/>
</dbReference>
<dbReference type="NCBIfam" id="NF000592">
    <property type="entry name" value="PRK00013.1"/>
    <property type="match status" value="1"/>
</dbReference>
<dbReference type="NCBIfam" id="NF009487">
    <property type="entry name" value="PRK12849.1"/>
    <property type="match status" value="1"/>
</dbReference>
<dbReference type="NCBIfam" id="NF009488">
    <property type="entry name" value="PRK12850.1"/>
    <property type="match status" value="1"/>
</dbReference>
<dbReference type="NCBIfam" id="NF009489">
    <property type="entry name" value="PRK12851.1"/>
    <property type="match status" value="1"/>
</dbReference>
<dbReference type="PANTHER" id="PTHR45633">
    <property type="entry name" value="60 KDA HEAT SHOCK PROTEIN, MITOCHONDRIAL"/>
    <property type="match status" value="1"/>
</dbReference>
<dbReference type="Pfam" id="PF00118">
    <property type="entry name" value="Cpn60_TCP1"/>
    <property type="match status" value="1"/>
</dbReference>
<dbReference type="PRINTS" id="PR00298">
    <property type="entry name" value="CHAPERONIN60"/>
</dbReference>
<dbReference type="SUPFAM" id="SSF52029">
    <property type="entry name" value="GroEL apical domain-like"/>
    <property type="match status" value="1"/>
</dbReference>
<dbReference type="SUPFAM" id="SSF48592">
    <property type="entry name" value="GroEL equatorial domain-like"/>
    <property type="match status" value="1"/>
</dbReference>
<dbReference type="SUPFAM" id="SSF54849">
    <property type="entry name" value="GroEL-intermediate domain like"/>
    <property type="match status" value="1"/>
</dbReference>
<dbReference type="PROSITE" id="PS00296">
    <property type="entry name" value="CHAPERONINS_CPN60"/>
    <property type="match status" value="1"/>
</dbReference>
<name>CH60_NEIGO</name>
<comment type="function">
    <text evidence="1">Together with its co-chaperonin GroES, plays an essential role in assisting protein folding. The GroEL-GroES system forms a nano-cage that allows encapsulation of the non-native substrate proteins and provides a physical environment optimized to promote and accelerate protein folding.</text>
</comment>
<comment type="catalytic activity">
    <reaction evidence="1">
        <text>ATP + H2O + a folded polypeptide = ADP + phosphate + an unfolded polypeptide.</text>
        <dbReference type="EC" id="5.6.1.7"/>
    </reaction>
</comment>
<comment type="subunit">
    <text evidence="1">Forms a cylinder of 14 subunits composed of two heptameric rings stacked back-to-back. Interacts with the co-chaperonin GroES.</text>
</comment>
<comment type="subcellular location">
    <subcellularLocation>
        <location evidence="2">Cell outer membrane</location>
        <topology evidence="2">Peripheral membrane protein</topology>
    </subcellularLocation>
</comment>
<comment type="induction">
    <text evidence="2">By iron limitation, glucose deprivation, and growth under low oxygen supply.</text>
</comment>
<comment type="miscellaneous">
    <text>This protein shows ATPase activity.</text>
</comment>
<comment type="similarity">
    <text evidence="1">Belongs to the chaperonin (HSP60) family.</text>
</comment>
<organism>
    <name type="scientific">Neisseria gonorrhoeae</name>
    <dbReference type="NCBI Taxonomy" id="485"/>
    <lineage>
        <taxon>Bacteria</taxon>
        <taxon>Pseudomonadati</taxon>
        <taxon>Pseudomonadota</taxon>
        <taxon>Betaproteobacteria</taxon>
        <taxon>Neisseriales</taxon>
        <taxon>Neisseriaceae</taxon>
        <taxon>Neisseria</taxon>
    </lineage>
</organism>
<gene>
    <name evidence="1" type="primary">groEL</name>
    <name evidence="1" type="synonym">groL</name>
    <name type="synonym">hsp63</name>
    <name type="synonym">mopA</name>
</gene>
<evidence type="ECO:0000255" key="1">
    <source>
        <dbReference type="HAMAP-Rule" id="MF_00600"/>
    </source>
</evidence>
<evidence type="ECO:0000269" key="2">
    <source>
    </source>
</evidence>
<evidence type="ECO:0000305" key="3"/>
<reference key="1">
    <citation type="journal article" date="1995" name="Mol. Microbiol.">
        <title>Construction of recombinant neisserial Hsp60 proteins and mapping of antigenic domains.</title>
        <authorList>
            <person name="Pannekoek Y."/>
            <person name="Dankert J."/>
            <person name="van Putten J.P.M."/>
        </authorList>
    </citation>
    <scope>NUCLEOTIDE SEQUENCE [GENOMIC DNA]</scope>
    <source>
        <strain>PID 2</strain>
        <strain>VP1 / 830563</strain>
    </source>
</reference>
<reference key="2">
    <citation type="journal article" date="1992" name="J. Bacteriol.">
        <title>Identification and molecular analysis of a 63-kilodalton stress protein from Neisseria gonorrhoeae.</title>
        <authorList>
            <person name="Pannekoek Y."/>
            <person name="van Putten J.P.M."/>
            <person name="Dankert J."/>
        </authorList>
    </citation>
    <scope>PROTEIN SEQUENCE OF 1-27</scope>
    <scope>SUBCELLULAR LOCATION</scope>
    <scope>INDUCTION</scope>
    <source>
        <strain>VP1 / 830563</strain>
    </source>
</reference>
<proteinExistence type="evidence at protein level"/>
<sequence>MAAKDVQFGNEVRQKMVNGVNILANAVRVTLGPKGRNVVVDRAFGGPHITKDGVTVAKEIELKDKFENMGAQMVKEVASKTNDVAGDGTTTATVLAQSIVAEGIKAVTAGMNPTDLKRGIDKAVAALVEELKNIAKPCDTSKEIAQVGSISANSDEQVGAIIAEAMEKVGKEGVITVEDGKSLENELDVVEGMQFDRGYLSPYFINDAEKQIAGLDNPFVLLFDKKISNIRDLLPVLEQVAKASRPLLIIAEDVEGEALATLVVNNIRGVLKTVAVKAPGFGDRRKAMLQDIAILTGAVVISEEVGLSLEKATLDDLGQAKRIEIGKENTTVIDGFGDAAQIEARVAEIRQQIETATSDYDKEKLQERVAKLAGGVAVIKVGAATEVEMKEKKDRVEDALHATRAAVEEGVVAGGGVALLRARAALENLHTGNADQDAGVQIVLRAVESPLRQIVANAGGEPSVVVNKVLEGKGNYGYNAGSGEYGDMIGMGVLDPAKVTRSALQHAASIAGLMLTTDCMIAEIPEEKPAVPDMGGMGGMGGMM</sequence>